<proteinExistence type="inferred from homology"/>
<organism>
    <name type="scientific">Burkholderia ambifaria (strain ATCC BAA-244 / DSM 16087 / CCUG 44356 / LMG 19182 / AMMD)</name>
    <name type="common">Burkholderia cepacia (strain AMMD)</name>
    <dbReference type="NCBI Taxonomy" id="339670"/>
    <lineage>
        <taxon>Bacteria</taxon>
        <taxon>Pseudomonadati</taxon>
        <taxon>Pseudomonadota</taxon>
        <taxon>Betaproteobacteria</taxon>
        <taxon>Burkholderiales</taxon>
        <taxon>Burkholderiaceae</taxon>
        <taxon>Burkholderia</taxon>
        <taxon>Burkholderia cepacia complex</taxon>
    </lineage>
</organism>
<accession>Q0BFF5</accession>
<gene>
    <name type="ordered locus">Bamb_1560</name>
</gene>
<reference key="1">
    <citation type="submission" date="2006-08" db="EMBL/GenBank/DDBJ databases">
        <title>Complete sequence of chromosome 1 of Burkholderia cepacia AMMD.</title>
        <authorList>
            <person name="Copeland A."/>
            <person name="Lucas S."/>
            <person name="Lapidus A."/>
            <person name="Barry K."/>
            <person name="Detter J.C."/>
            <person name="Glavina del Rio T."/>
            <person name="Hammon N."/>
            <person name="Israni S."/>
            <person name="Pitluck S."/>
            <person name="Bruce D."/>
            <person name="Chain P."/>
            <person name="Malfatti S."/>
            <person name="Shin M."/>
            <person name="Vergez L."/>
            <person name="Schmutz J."/>
            <person name="Larimer F."/>
            <person name="Land M."/>
            <person name="Hauser L."/>
            <person name="Kyrpides N."/>
            <person name="Kim E."/>
            <person name="Parke J."/>
            <person name="Coenye T."/>
            <person name="Konstantinidis K."/>
            <person name="Ramette A."/>
            <person name="Tiedje J."/>
            <person name="Richardson P."/>
        </authorList>
    </citation>
    <scope>NUCLEOTIDE SEQUENCE [LARGE SCALE GENOMIC DNA]</scope>
    <source>
        <strain>ATCC BAA-244 / DSM 16087 / CCUG 44356 / LMG 19182 / AMMD</strain>
    </source>
</reference>
<dbReference type="EMBL" id="CP000440">
    <property type="protein sequence ID" value="ABI87118.1"/>
    <property type="molecule type" value="Genomic_DNA"/>
</dbReference>
<dbReference type="RefSeq" id="WP_011656847.1">
    <property type="nucleotide sequence ID" value="NZ_CP009798.1"/>
</dbReference>
<dbReference type="KEGG" id="bam:Bamb_1560"/>
<dbReference type="PATRIC" id="fig|339670.21.peg.3408"/>
<dbReference type="eggNOG" id="COG1671">
    <property type="taxonomic scope" value="Bacteria"/>
</dbReference>
<dbReference type="Proteomes" id="UP000000662">
    <property type="component" value="Chromosome 1"/>
</dbReference>
<dbReference type="CDD" id="cd18720">
    <property type="entry name" value="PIN_YqxD-like"/>
    <property type="match status" value="1"/>
</dbReference>
<dbReference type="HAMAP" id="MF_00489">
    <property type="entry name" value="UPF0178"/>
    <property type="match status" value="1"/>
</dbReference>
<dbReference type="InterPro" id="IPR003791">
    <property type="entry name" value="UPF0178"/>
</dbReference>
<dbReference type="NCBIfam" id="NF001095">
    <property type="entry name" value="PRK00124.1"/>
    <property type="match status" value="1"/>
</dbReference>
<dbReference type="PANTHER" id="PTHR35146">
    <property type="entry name" value="UPF0178 PROTEIN YAII"/>
    <property type="match status" value="1"/>
</dbReference>
<dbReference type="PANTHER" id="PTHR35146:SF1">
    <property type="entry name" value="UPF0178 PROTEIN YAII"/>
    <property type="match status" value="1"/>
</dbReference>
<dbReference type="Pfam" id="PF02639">
    <property type="entry name" value="DUF188"/>
    <property type="match status" value="1"/>
</dbReference>
<protein>
    <recommendedName>
        <fullName evidence="1">UPF0178 protein Bamb_1560</fullName>
    </recommendedName>
</protein>
<feature type="chain" id="PRO_1000014413" description="UPF0178 protein Bamb_1560">
    <location>
        <begin position="1"/>
        <end position="150"/>
    </location>
</feature>
<comment type="similarity">
    <text evidence="1">Belongs to the UPF0178 family.</text>
</comment>
<sequence>MQVLVDADACPAVIKDMLFRAARRAEICVTLVANQFLRTPPSPFIKSVQVPAGFDVADARIVELAQAGDLVITADIPLAAAVLDKGAHALDPRGNWFSRENIEERLSTRAMMDQLRSSGVDTGGPAPFSARDGKAFASQLDRFLARHGKP</sequence>
<name>Y1560_BURCM</name>
<evidence type="ECO:0000255" key="1">
    <source>
        <dbReference type="HAMAP-Rule" id="MF_00489"/>
    </source>
</evidence>